<sequence>MNLTPKEIVKFLDDYVIGQKKAKKIIAIALRNRYRRMQLSPELQDDIVPKNILMIGSTGVGKTEIARRLAKMMGFPFIKIEASKYTEVGFVGRDVESMVRDLANAALNLVKNEQREKNKDKIDEFIENKILEKLLPPLPKGISDEKQEEYKNSLEKMRTKLRNGDLDESTIEIEISQNMFDTNPNLPPEMGAMQDIVKVIGVGSKKVKKEMKIKDAKNALKNEAGEKILDQESIKSEALKRAENEGIIFIDEIDKIAVSSGNSNRQDPSKEGVQRDLLPIVEGSNIQTKIGTLKTDHILFIAAGAFHLSKPSDLIPELQGRFPLRVELDSLDDKALYEILTRPKNSLLKQYSQLLKTENLELEFDDEAIKEIAKIASRANEEMQDIGARRLHTVIEKLLEDLSFEADEYAGKKFVVDKKMVEEKLGDIIENKDLARYIL</sequence>
<organism>
    <name type="scientific">Campylobacter jejuni subsp. jejuni serotype O:6 (strain 81116 / NCTC 11828)</name>
    <dbReference type="NCBI Taxonomy" id="407148"/>
    <lineage>
        <taxon>Bacteria</taxon>
        <taxon>Pseudomonadati</taxon>
        <taxon>Campylobacterota</taxon>
        <taxon>Epsilonproteobacteria</taxon>
        <taxon>Campylobacterales</taxon>
        <taxon>Campylobacteraceae</taxon>
        <taxon>Campylobacter</taxon>
    </lineage>
</organism>
<proteinExistence type="inferred from homology"/>
<gene>
    <name evidence="1" type="primary">hslU</name>
    <name type="ordered locus">C8J_0618</name>
</gene>
<protein>
    <recommendedName>
        <fullName evidence="1">ATP-dependent protease ATPase subunit HslU</fullName>
    </recommendedName>
    <alternativeName>
        <fullName evidence="1">Unfoldase HslU</fullName>
    </alternativeName>
</protein>
<dbReference type="EMBL" id="CP000814">
    <property type="protein sequence ID" value="ABV52217.1"/>
    <property type="molecule type" value="Genomic_DNA"/>
</dbReference>
<dbReference type="RefSeq" id="WP_002866517.1">
    <property type="nucleotide sequence ID" value="NC_009839.1"/>
</dbReference>
<dbReference type="SMR" id="A8FL80"/>
<dbReference type="KEGG" id="cju:C8J_0618"/>
<dbReference type="HOGENOM" id="CLU_033123_0_0_7"/>
<dbReference type="GO" id="GO:0009376">
    <property type="term" value="C:HslUV protease complex"/>
    <property type="evidence" value="ECO:0007669"/>
    <property type="project" value="UniProtKB-UniRule"/>
</dbReference>
<dbReference type="GO" id="GO:0005524">
    <property type="term" value="F:ATP binding"/>
    <property type="evidence" value="ECO:0007669"/>
    <property type="project" value="UniProtKB-UniRule"/>
</dbReference>
<dbReference type="GO" id="GO:0016887">
    <property type="term" value="F:ATP hydrolysis activity"/>
    <property type="evidence" value="ECO:0007669"/>
    <property type="project" value="InterPro"/>
</dbReference>
<dbReference type="GO" id="GO:0008233">
    <property type="term" value="F:peptidase activity"/>
    <property type="evidence" value="ECO:0007669"/>
    <property type="project" value="InterPro"/>
</dbReference>
<dbReference type="GO" id="GO:0036402">
    <property type="term" value="F:proteasome-activating activity"/>
    <property type="evidence" value="ECO:0007669"/>
    <property type="project" value="UniProtKB-UniRule"/>
</dbReference>
<dbReference type="GO" id="GO:0043335">
    <property type="term" value="P:protein unfolding"/>
    <property type="evidence" value="ECO:0007669"/>
    <property type="project" value="UniProtKB-UniRule"/>
</dbReference>
<dbReference type="GO" id="GO:0051603">
    <property type="term" value="P:proteolysis involved in protein catabolic process"/>
    <property type="evidence" value="ECO:0007669"/>
    <property type="project" value="TreeGrafter"/>
</dbReference>
<dbReference type="Gene3D" id="1.10.8.60">
    <property type="match status" value="1"/>
</dbReference>
<dbReference type="Gene3D" id="3.40.50.300">
    <property type="entry name" value="P-loop containing nucleotide triphosphate hydrolases"/>
    <property type="match status" value="2"/>
</dbReference>
<dbReference type="HAMAP" id="MF_00249">
    <property type="entry name" value="HslU"/>
    <property type="match status" value="1"/>
</dbReference>
<dbReference type="InterPro" id="IPR003593">
    <property type="entry name" value="AAA+_ATPase"/>
</dbReference>
<dbReference type="InterPro" id="IPR050052">
    <property type="entry name" value="ATP-dep_Clp_protease_ClpX"/>
</dbReference>
<dbReference type="InterPro" id="IPR003959">
    <property type="entry name" value="ATPase_AAA_core"/>
</dbReference>
<dbReference type="InterPro" id="IPR019489">
    <property type="entry name" value="Clp_ATPase_C"/>
</dbReference>
<dbReference type="InterPro" id="IPR004491">
    <property type="entry name" value="HslU"/>
</dbReference>
<dbReference type="InterPro" id="IPR027417">
    <property type="entry name" value="P-loop_NTPase"/>
</dbReference>
<dbReference type="NCBIfam" id="TIGR00390">
    <property type="entry name" value="hslU"/>
    <property type="match status" value="1"/>
</dbReference>
<dbReference type="NCBIfam" id="NF003544">
    <property type="entry name" value="PRK05201.1"/>
    <property type="match status" value="1"/>
</dbReference>
<dbReference type="PANTHER" id="PTHR48102">
    <property type="entry name" value="ATP-DEPENDENT CLP PROTEASE ATP-BINDING SUBUNIT CLPX-LIKE, MITOCHONDRIAL-RELATED"/>
    <property type="match status" value="1"/>
</dbReference>
<dbReference type="PANTHER" id="PTHR48102:SF3">
    <property type="entry name" value="ATP-DEPENDENT PROTEASE ATPASE SUBUNIT HSLU"/>
    <property type="match status" value="1"/>
</dbReference>
<dbReference type="Pfam" id="PF00004">
    <property type="entry name" value="AAA"/>
    <property type="match status" value="1"/>
</dbReference>
<dbReference type="Pfam" id="PF07724">
    <property type="entry name" value="AAA_2"/>
    <property type="match status" value="1"/>
</dbReference>
<dbReference type="Pfam" id="PF10431">
    <property type="entry name" value="ClpB_D2-small"/>
    <property type="match status" value="1"/>
</dbReference>
<dbReference type="SMART" id="SM00382">
    <property type="entry name" value="AAA"/>
    <property type="match status" value="1"/>
</dbReference>
<dbReference type="SMART" id="SM01086">
    <property type="entry name" value="ClpB_D2-small"/>
    <property type="match status" value="1"/>
</dbReference>
<dbReference type="SUPFAM" id="SSF52540">
    <property type="entry name" value="P-loop containing nucleoside triphosphate hydrolases"/>
    <property type="match status" value="1"/>
</dbReference>
<name>HSLU_CAMJ8</name>
<accession>A8FL80</accession>
<evidence type="ECO:0000255" key="1">
    <source>
        <dbReference type="HAMAP-Rule" id="MF_00249"/>
    </source>
</evidence>
<feature type="chain" id="PRO_1000071851" description="ATP-dependent protease ATPase subunit HslU">
    <location>
        <begin position="1"/>
        <end position="439"/>
    </location>
</feature>
<feature type="binding site" evidence="1">
    <location>
        <position position="17"/>
    </location>
    <ligand>
        <name>ATP</name>
        <dbReference type="ChEBI" id="CHEBI:30616"/>
    </ligand>
</feature>
<feature type="binding site" evidence="1">
    <location>
        <begin position="59"/>
        <end position="64"/>
    </location>
    <ligand>
        <name>ATP</name>
        <dbReference type="ChEBI" id="CHEBI:30616"/>
    </ligand>
</feature>
<feature type="binding site" evidence="1">
    <location>
        <position position="251"/>
    </location>
    <ligand>
        <name>ATP</name>
        <dbReference type="ChEBI" id="CHEBI:30616"/>
    </ligand>
</feature>
<feature type="binding site" evidence="1">
    <location>
        <position position="317"/>
    </location>
    <ligand>
        <name>ATP</name>
        <dbReference type="ChEBI" id="CHEBI:30616"/>
    </ligand>
</feature>
<feature type="binding site" evidence="1">
    <location>
        <position position="389"/>
    </location>
    <ligand>
        <name>ATP</name>
        <dbReference type="ChEBI" id="CHEBI:30616"/>
    </ligand>
</feature>
<comment type="function">
    <text evidence="1">ATPase subunit of a proteasome-like degradation complex; this subunit has chaperone activity. The binding of ATP and its subsequent hydrolysis by HslU are essential for unfolding of protein substrates subsequently hydrolyzed by HslV. HslU recognizes the N-terminal part of its protein substrates and unfolds these before they are guided to HslV for hydrolysis.</text>
</comment>
<comment type="subunit">
    <text evidence="1">A double ring-shaped homohexamer of HslV is capped on each side by a ring-shaped HslU homohexamer. The assembly of the HslU/HslV complex is dependent on binding of ATP.</text>
</comment>
<comment type="subcellular location">
    <subcellularLocation>
        <location evidence="1">Cytoplasm</location>
    </subcellularLocation>
</comment>
<comment type="similarity">
    <text evidence="1">Belongs to the ClpX chaperone family. HslU subfamily.</text>
</comment>
<reference key="1">
    <citation type="journal article" date="2007" name="J. Bacteriol.">
        <title>The complete genome sequence of Campylobacter jejuni strain 81116 (NCTC11828).</title>
        <authorList>
            <person name="Pearson B.M."/>
            <person name="Gaskin D.J.H."/>
            <person name="Segers R.P.A.M."/>
            <person name="Wells J.M."/>
            <person name="Nuijten P.J.M."/>
            <person name="van Vliet A.H.M."/>
        </authorList>
    </citation>
    <scope>NUCLEOTIDE SEQUENCE [LARGE SCALE GENOMIC DNA]</scope>
    <source>
        <strain>81116 / NCTC 11828</strain>
    </source>
</reference>
<keyword id="KW-0067">ATP-binding</keyword>
<keyword id="KW-0143">Chaperone</keyword>
<keyword id="KW-0963">Cytoplasm</keyword>
<keyword id="KW-0547">Nucleotide-binding</keyword>
<keyword id="KW-0346">Stress response</keyword>